<dbReference type="EC" id="2.1.1.85" evidence="1"/>
<dbReference type="EMBL" id="DP000577">
    <property type="protein sequence ID" value="ACA35060.1"/>
    <property type="status" value="ALT_INIT"/>
    <property type="molecule type" value="Genomic_DNA"/>
</dbReference>
<dbReference type="RefSeq" id="XP_002754318.2">
    <property type="nucleotide sequence ID" value="XM_002754272.4"/>
</dbReference>
<dbReference type="RefSeq" id="XP_035117330.1">
    <property type="nucleotide sequence ID" value="XM_035261439.2"/>
</dbReference>
<dbReference type="SMR" id="B0VX69"/>
<dbReference type="FunCoup" id="B0VX69">
    <property type="interactions" value="3136"/>
</dbReference>
<dbReference type="STRING" id="9483.ENSCJAP00000012434"/>
<dbReference type="GeneID" id="100403104"/>
<dbReference type="eggNOG" id="KOG1337">
    <property type="taxonomic scope" value="Eukaryota"/>
</dbReference>
<dbReference type="HOGENOM" id="CLU_028272_0_0_1"/>
<dbReference type="InParanoid" id="B0VX69"/>
<dbReference type="OrthoDB" id="441812at2759"/>
<dbReference type="TreeFam" id="TF354226"/>
<dbReference type="Proteomes" id="UP000008225">
    <property type="component" value="Unplaced"/>
</dbReference>
<dbReference type="GO" id="GO:0005737">
    <property type="term" value="C:cytoplasm"/>
    <property type="evidence" value="ECO:0000250"/>
    <property type="project" value="UniProtKB"/>
</dbReference>
<dbReference type="GO" id="GO:0005634">
    <property type="term" value="C:nucleus"/>
    <property type="evidence" value="ECO:0007669"/>
    <property type="project" value="UniProtKB-SubCell"/>
</dbReference>
<dbReference type="GO" id="GO:0003779">
    <property type="term" value="F:actin binding"/>
    <property type="evidence" value="ECO:0007669"/>
    <property type="project" value="UniProtKB-KW"/>
</dbReference>
<dbReference type="GO" id="GO:0046975">
    <property type="term" value="F:histone H3K36 methyltransferase activity"/>
    <property type="evidence" value="ECO:0000250"/>
    <property type="project" value="UniProtKB"/>
</dbReference>
<dbReference type="GO" id="GO:0018064">
    <property type="term" value="F:protein-L-histidine N-tele-methyltransferase activity"/>
    <property type="evidence" value="ECO:0000250"/>
    <property type="project" value="UniProtKB"/>
</dbReference>
<dbReference type="GO" id="GO:0003713">
    <property type="term" value="F:transcription coactivator activity"/>
    <property type="evidence" value="ECO:0000250"/>
    <property type="project" value="UniProtKB"/>
</dbReference>
<dbReference type="GO" id="GO:0030047">
    <property type="term" value="P:actin modification"/>
    <property type="evidence" value="ECO:0000250"/>
    <property type="project" value="UniProtKB"/>
</dbReference>
<dbReference type="GO" id="GO:0018021">
    <property type="term" value="P:peptidyl-histidine methylation"/>
    <property type="evidence" value="ECO:0000250"/>
    <property type="project" value="UniProtKB"/>
</dbReference>
<dbReference type="GO" id="GO:0045893">
    <property type="term" value="P:positive regulation of DNA-templated transcription"/>
    <property type="evidence" value="ECO:0000250"/>
    <property type="project" value="UniProtKB"/>
</dbReference>
<dbReference type="GO" id="GO:0070472">
    <property type="term" value="P:regulation of uterine smooth muscle contraction"/>
    <property type="evidence" value="ECO:0000250"/>
    <property type="project" value="UniProtKB"/>
</dbReference>
<dbReference type="CDD" id="cd19176">
    <property type="entry name" value="SET_SETD3"/>
    <property type="match status" value="1"/>
</dbReference>
<dbReference type="FunFam" id="3.90.1410.10:FF:000001">
    <property type="entry name" value="histone-lysine N-methyltransferase setd3 isoform X1"/>
    <property type="match status" value="1"/>
</dbReference>
<dbReference type="FunFam" id="3.90.1420.10:FF:000001">
    <property type="entry name" value="histone-lysine N-methyltransferase setd3 isoform X1"/>
    <property type="match status" value="1"/>
</dbReference>
<dbReference type="Gene3D" id="3.90.1420.10">
    <property type="entry name" value="Rubisco LSMT, substrate-binding domain"/>
    <property type="match status" value="1"/>
</dbReference>
<dbReference type="Gene3D" id="3.90.1410.10">
    <property type="entry name" value="set domain protein methyltransferase, domain 1"/>
    <property type="match status" value="1"/>
</dbReference>
<dbReference type="InterPro" id="IPR015353">
    <property type="entry name" value="Rubisco_LSMT_subst-bd"/>
</dbReference>
<dbReference type="InterPro" id="IPR036464">
    <property type="entry name" value="Rubisco_LSMT_subst-bd_sf"/>
</dbReference>
<dbReference type="InterPro" id="IPR001214">
    <property type="entry name" value="SET_dom"/>
</dbReference>
<dbReference type="InterPro" id="IPR046341">
    <property type="entry name" value="SET_dom_sf"/>
</dbReference>
<dbReference type="InterPro" id="IPR025785">
    <property type="entry name" value="SETD3"/>
</dbReference>
<dbReference type="InterPro" id="IPR044428">
    <property type="entry name" value="SETD3_SET"/>
</dbReference>
<dbReference type="InterPro" id="IPR050600">
    <property type="entry name" value="SETD3_SETD6_MTase"/>
</dbReference>
<dbReference type="PANTHER" id="PTHR13271:SF47">
    <property type="entry name" value="ACTIN-HISTIDINE N-METHYLTRANSFERASE"/>
    <property type="match status" value="1"/>
</dbReference>
<dbReference type="PANTHER" id="PTHR13271">
    <property type="entry name" value="UNCHARACTERIZED PUTATIVE METHYLTRANSFERASE"/>
    <property type="match status" value="1"/>
</dbReference>
<dbReference type="Pfam" id="PF09273">
    <property type="entry name" value="Rubis-subs-bind"/>
    <property type="match status" value="1"/>
</dbReference>
<dbReference type="Pfam" id="PF00856">
    <property type="entry name" value="SET"/>
    <property type="match status" value="1"/>
</dbReference>
<dbReference type="SUPFAM" id="SSF81822">
    <property type="entry name" value="RuBisCo LSMT C-terminal, substrate-binding domain"/>
    <property type="match status" value="1"/>
</dbReference>
<dbReference type="SUPFAM" id="SSF82199">
    <property type="entry name" value="SET domain"/>
    <property type="match status" value="1"/>
</dbReference>
<dbReference type="PROSITE" id="PS51565">
    <property type="entry name" value="SAM_MT85_SETD3"/>
    <property type="match status" value="1"/>
</dbReference>
<dbReference type="PROSITE" id="PS50280">
    <property type="entry name" value="SET"/>
    <property type="match status" value="1"/>
</dbReference>
<name>SETD3_CALJA</name>
<comment type="function">
    <text evidence="1">Protein-histidine N-methyltransferase that specifically mediates 3-methylhistidine (tele-methylhistidine) methylation of actin at 'His-73'. Histidine methylation of actin is required for smooth muscle contraction of the laboring uterus during delivery. Does not have protein-lysine N-methyltransferase activity and probably only catalyzes histidine methylation of actin.</text>
</comment>
<comment type="catalytic activity">
    <reaction evidence="1">
        <text>L-histidyl-[protein] + S-adenosyl-L-methionine = N(tele)-methyl-L-histidyl-[protein] + S-adenosyl-L-homocysteine + H(+)</text>
        <dbReference type="Rhea" id="RHEA:19369"/>
        <dbReference type="Rhea" id="RHEA-COMP:9745"/>
        <dbReference type="Rhea" id="RHEA-COMP:11600"/>
        <dbReference type="ChEBI" id="CHEBI:15378"/>
        <dbReference type="ChEBI" id="CHEBI:16367"/>
        <dbReference type="ChEBI" id="CHEBI:29979"/>
        <dbReference type="ChEBI" id="CHEBI:57856"/>
        <dbReference type="ChEBI" id="CHEBI:59789"/>
        <dbReference type="EC" id="2.1.1.85"/>
    </reaction>
</comment>
<comment type="subunit">
    <text evidence="2">Interacts with MYOD1.</text>
</comment>
<comment type="subcellular location">
    <subcellularLocation>
        <location evidence="1">Cytoplasm</location>
    </subcellularLocation>
    <subcellularLocation>
        <location evidence="1">Nucleus</location>
    </subcellularLocation>
    <text evidence="1">Localizes mainly in the cytoplasm.</text>
</comment>
<comment type="domain">
    <text evidence="1">The SET domain specifically recognizes and binds actin, suggesting that it does not accommodate substrates diverging from actin.</text>
</comment>
<comment type="PTM">
    <text evidence="1">Phosphorylated by GSK3B, which is required for recognition by the SCF(FBXW7) complex and subsequent degradation.</text>
</comment>
<comment type="PTM">
    <text evidence="1">Ubiquitinated by the SCF(FBXW7) complex following phosphorylation by GSK3B, leading to its degradation by the proteasome.</text>
</comment>
<comment type="similarity">
    <text evidence="4">Belongs to the class V-like SAM-binding methyltransferase superfamily. SETD3 actin-histidine methyltransferase family.</text>
</comment>
<comment type="sequence caution" evidence="6">
    <conflict type="erroneous initiation">
        <sequence resource="EMBL-CDS" id="ACA35060"/>
    </conflict>
    <text>Extended N-terminus.</text>
</comment>
<organism>
    <name type="scientific">Callithrix jacchus</name>
    <name type="common">White-tufted-ear marmoset</name>
    <dbReference type="NCBI Taxonomy" id="9483"/>
    <lineage>
        <taxon>Eukaryota</taxon>
        <taxon>Metazoa</taxon>
        <taxon>Chordata</taxon>
        <taxon>Craniata</taxon>
        <taxon>Vertebrata</taxon>
        <taxon>Euteleostomi</taxon>
        <taxon>Mammalia</taxon>
        <taxon>Eutheria</taxon>
        <taxon>Euarchontoglires</taxon>
        <taxon>Primates</taxon>
        <taxon>Haplorrhini</taxon>
        <taxon>Platyrrhini</taxon>
        <taxon>Cebidae</taxon>
        <taxon>Callitrichinae</taxon>
        <taxon>Callithrix</taxon>
        <taxon>Callithrix</taxon>
    </lineage>
</organism>
<sequence length="595" mass="67507">MGKKSRVKTQKSGTGATATVSPKEILNLTSELLQKCSSPAPGPGKEWEEYVQIRTLVEKIRKKQKGLSVTFDGKREDYFPDLMKWASENGASVEGFEMVNFKEEGFGLRATRDIKAEELFLWVPRKLLMTVESAKNSVLGPLYSQDRILQAMGNIALAFHLLCERASPNSFWQPYIQTLPSEYDTPLYFEEEEVRYLQSTQAVHDVFSQYKNTARQYAYFYKVIQTHPHANKLPLKDSFTYEDYRWAVSSVMTRQNQIPTEDGSRVTLALIPLWDMCNHTNGLITTGYNLEDDRCECVALQDFRAGEQIYIFYGTRSNAEFVIHSGFFFDNNSHDRVKIKLGVSKSDRLYAMKAEVLARAGIPTSSVFALHFTEPPISAQLLAFLRVFCMTEEELKEHLLGDNAIDRIFTLGNSEFPVSWDNEVKLWTFLEDRASLLLKTYKTTIEEDKSVLKNQDLSVRAKMAIKLRLGEKEILEKAVKSAAVNREYYRQQMEEKAPLPKYEESNLGLLESSMGDSRLPLVLRNLEEEAGVQDALSIREAISKATATENGLVNGENSIPNGTRSEDENLNQEESKRAVEDAKGSSSDRADAVKE</sequence>
<feature type="chain" id="PRO_0000408337" description="Actin-histidine N-methyltransferase">
    <location>
        <begin position="1"/>
        <end position="595"/>
    </location>
</feature>
<feature type="domain" description="SET" evidence="3">
    <location>
        <begin position="94"/>
        <end position="314"/>
    </location>
</feature>
<feature type="region of interest" description="Disordered" evidence="5">
    <location>
        <begin position="1"/>
        <end position="22"/>
    </location>
</feature>
<feature type="region of interest" description="Disordered" evidence="5">
    <location>
        <begin position="549"/>
        <end position="595"/>
    </location>
</feature>
<feature type="compositionally biased region" description="Polar residues" evidence="5">
    <location>
        <begin position="10"/>
        <end position="20"/>
    </location>
</feature>
<feature type="compositionally biased region" description="Polar residues" evidence="5">
    <location>
        <begin position="549"/>
        <end position="563"/>
    </location>
</feature>
<feature type="compositionally biased region" description="Basic and acidic residues" evidence="5">
    <location>
        <begin position="573"/>
        <end position="595"/>
    </location>
</feature>
<feature type="binding site" evidence="1">
    <location>
        <position position="75"/>
    </location>
    <ligand>
        <name>S-adenosyl-L-methionine</name>
        <dbReference type="ChEBI" id="CHEBI:59789"/>
    </ligand>
</feature>
<feature type="binding site" evidence="1">
    <location>
        <begin position="104"/>
        <end position="106"/>
    </location>
    <ligand>
        <name>S-adenosyl-L-methionine</name>
        <dbReference type="ChEBI" id="CHEBI:59789"/>
    </ligand>
</feature>
<feature type="binding site" evidence="1">
    <location>
        <position position="254"/>
    </location>
    <ligand>
        <name>S-adenosyl-L-methionine</name>
        <dbReference type="ChEBI" id="CHEBI:59789"/>
    </ligand>
</feature>
<feature type="binding site" evidence="1">
    <location>
        <begin position="275"/>
        <end position="279"/>
    </location>
    <ligand>
        <name>S-adenosyl-L-methionine</name>
        <dbReference type="ChEBI" id="CHEBI:59789"/>
    </ligand>
</feature>
<feature type="binding site" evidence="1">
    <location>
        <begin position="325"/>
        <end position="327"/>
    </location>
    <ligand>
        <name>S-adenosyl-L-methionine</name>
        <dbReference type="ChEBI" id="CHEBI:59789"/>
    </ligand>
</feature>
<feature type="modified residue" description="Phosphoserine" evidence="1">
    <location>
        <position position="513"/>
    </location>
</feature>
<proteinExistence type="inferred from homology"/>
<accession>B0VX69</accession>
<protein>
    <recommendedName>
        <fullName evidence="1">Actin-histidine N-methyltransferase</fullName>
        <ecNumber evidence="1">2.1.1.85</ecNumber>
    </recommendedName>
    <alternativeName>
        <fullName evidence="6">Protein-L-histidine N-tele-methyltransferase</fullName>
    </alternativeName>
    <alternativeName>
        <fullName evidence="6">SET domain-containing protein 3</fullName>
    </alternativeName>
</protein>
<keyword id="KW-0009">Actin-binding</keyword>
<keyword id="KW-0963">Cytoplasm</keyword>
<keyword id="KW-0489">Methyltransferase</keyword>
<keyword id="KW-0539">Nucleus</keyword>
<keyword id="KW-0597">Phosphoprotein</keyword>
<keyword id="KW-1185">Reference proteome</keyword>
<keyword id="KW-0949">S-adenosyl-L-methionine</keyword>
<keyword id="KW-0808">Transferase</keyword>
<keyword id="KW-0832">Ubl conjugation</keyword>
<evidence type="ECO:0000250" key="1">
    <source>
        <dbReference type="UniProtKB" id="Q86TU7"/>
    </source>
</evidence>
<evidence type="ECO:0000250" key="2">
    <source>
        <dbReference type="UniProtKB" id="Q91WC0"/>
    </source>
</evidence>
<evidence type="ECO:0000255" key="3">
    <source>
        <dbReference type="PROSITE-ProRule" id="PRU00190"/>
    </source>
</evidence>
<evidence type="ECO:0000255" key="4">
    <source>
        <dbReference type="PROSITE-ProRule" id="PRU00898"/>
    </source>
</evidence>
<evidence type="ECO:0000256" key="5">
    <source>
        <dbReference type="SAM" id="MobiDB-lite"/>
    </source>
</evidence>
<evidence type="ECO:0000305" key="6"/>
<reference key="1">
    <citation type="submission" date="2008-02" db="EMBL/GenBank/DDBJ databases">
        <title>NISC comparative sequencing initiative.</title>
        <authorList>
            <person name="Antonellis A."/>
            <person name="Ayele K."/>
            <person name="Benjamin B."/>
            <person name="Blakesley R.W."/>
            <person name="Boakye A."/>
            <person name="Bouffard G.G."/>
            <person name="Brinkley C."/>
            <person name="Brooks S."/>
            <person name="Chu G."/>
            <person name="Coleman H."/>
            <person name="Engle J."/>
            <person name="Gestole M."/>
            <person name="Greene A."/>
            <person name="Guan X."/>
            <person name="Gupta J."/>
            <person name="Haghighi P."/>
            <person name="Han J."/>
            <person name="Hansen N."/>
            <person name="Ho S.-L."/>
            <person name="Hu P."/>
            <person name="Hunter G."/>
            <person name="Hurle B."/>
            <person name="Idol J.R."/>
            <person name="Kwong P."/>
            <person name="Laric P."/>
            <person name="Larson S."/>
            <person name="Lee-Lin S.-Q."/>
            <person name="Legaspi R."/>
            <person name="Madden M."/>
            <person name="Maduro Q.L."/>
            <person name="Maduro V.B."/>
            <person name="Margulies E.H."/>
            <person name="Masiello C."/>
            <person name="Maskeri B."/>
            <person name="McDowell J."/>
            <person name="Mojidi H.A."/>
            <person name="Mullikin J.C."/>
            <person name="Oestreicher J.S."/>
            <person name="Park M."/>
            <person name="Portnoy M.E."/>
            <person name="Prasad A."/>
            <person name="Puri O."/>
            <person name="Reddix-Dugue N."/>
            <person name="Schandler K."/>
            <person name="Schueler M.G."/>
            <person name="Sison C."/>
            <person name="Stantripop S."/>
            <person name="Stephen E."/>
            <person name="Taye A."/>
            <person name="Thomas J.W."/>
            <person name="Thomas P.J."/>
            <person name="Tsipouri V."/>
            <person name="Ung L."/>
            <person name="Vogt J.L."/>
            <person name="Wetherby K.D."/>
            <person name="Young A."/>
            <person name="Green E.D."/>
        </authorList>
    </citation>
    <scope>NUCLEOTIDE SEQUENCE [LARGE SCALE GENOMIC DNA]</scope>
</reference>
<gene>
    <name evidence="1" type="primary">SETD3</name>
</gene>